<proteinExistence type="evidence at transcript level"/>
<dbReference type="EMBL" id="BC105575">
    <property type="protein sequence ID" value="AAI05576.1"/>
    <property type="molecule type" value="mRNA"/>
</dbReference>
<dbReference type="RefSeq" id="XP_005219600.1">
    <property type="nucleotide sequence ID" value="XM_005219543.2"/>
</dbReference>
<dbReference type="RefSeq" id="XP_005219601.1">
    <property type="nucleotide sequence ID" value="XM_005219544.2"/>
</dbReference>
<dbReference type="SMR" id="Q2KJ11"/>
<dbReference type="FunCoup" id="Q2KJ11">
    <property type="interactions" value="217"/>
</dbReference>
<dbReference type="STRING" id="9913.ENSBTAP00000073752"/>
<dbReference type="PaxDb" id="9913-ENSBTAP00000012042"/>
<dbReference type="GeneID" id="513006"/>
<dbReference type="CTD" id="4818"/>
<dbReference type="eggNOG" id="ENOG502SUH4">
    <property type="taxonomic scope" value="Eukaryota"/>
</dbReference>
<dbReference type="HOGENOM" id="CLU_133330_0_0_1"/>
<dbReference type="InParanoid" id="Q2KJ11"/>
<dbReference type="OrthoDB" id="9427654at2759"/>
<dbReference type="TreeFam" id="TF330587"/>
<dbReference type="Proteomes" id="UP000009136">
    <property type="component" value="Unplaced"/>
</dbReference>
<dbReference type="GO" id="GO:0044194">
    <property type="term" value="C:cytolytic granule"/>
    <property type="evidence" value="ECO:0000250"/>
    <property type="project" value="UniProtKB"/>
</dbReference>
<dbReference type="GO" id="GO:0101004">
    <property type="term" value="C:cytolytic granule membrane"/>
    <property type="evidence" value="ECO:0000250"/>
    <property type="project" value="UniProtKB"/>
</dbReference>
<dbReference type="GO" id="GO:0005886">
    <property type="term" value="C:plasma membrane"/>
    <property type="evidence" value="ECO:0000250"/>
    <property type="project" value="UniProtKB"/>
</dbReference>
<dbReference type="GO" id="GO:0035710">
    <property type="term" value="P:CD4-positive, alpha-beta T cell activation"/>
    <property type="evidence" value="ECO:0000250"/>
    <property type="project" value="UniProtKB"/>
</dbReference>
<dbReference type="GO" id="GO:0042832">
    <property type="term" value="P:defense response to protozoan"/>
    <property type="evidence" value="ECO:0000250"/>
    <property type="project" value="UniProtKB"/>
</dbReference>
<dbReference type="GO" id="GO:0140507">
    <property type="term" value="P:granzyme-mediated programmed cell death signaling pathway"/>
    <property type="evidence" value="ECO:0000250"/>
    <property type="project" value="UniProtKB"/>
</dbReference>
<dbReference type="GO" id="GO:0006954">
    <property type="term" value="P:inflammatory response"/>
    <property type="evidence" value="ECO:0007669"/>
    <property type="project" value="UniProtKB-KW"/>
</dbReference>
<dbReference type="GO" id="GO:0031640">
    <property type="term" value="P:killing of cells of another organism"/>
    <property type="evidence" value="ECO:0007669"/>
    <property type="project" value="UniProtKB-KW"/>
</dbReference>
<dbReference type="GO" id="GO:0043320">
    <property type="term" value="P:natural killer cell degranulation"/>
    <property type="evidence" value="ECO:0000250"/>
    <property type="project" value="UniProtKB"/>
</dbReference>
<dbReference type="GO" id="GO:0042267">
    <property type="term" value="P:natural killer cell mediated cytotoxicity"/>
    <property type="evidence" value="ECO:0000250"/>
    <property type="project" value="UniProtKB"/>
</dbReference>
<dbReference type="GO" id="GO:0002420">
    <property type="term" value="P:natural killer cell mediated cytotoxicity directed against tumor cell target"/>
    <property type="evidence" value="ECO:0000250"/>
    <property type="project" value="UniProtKB"/>
</dbReference>
<dbReference type="GO" id="GO:0050729">
    <property type="term" value="P:positive regulation of inflammatory response"/>
    <property type="evidence" value="ECO:0000250"/>
    <property type="project" value="UniProtKB"/>
</dbReference>
<dbReference type="FunFam" id="1.20.140.150:FF:000033">
    <property type="entry name" value="Natural killer cell granule protein 7"/>
    <property type="match status" value="1"/>
</dbReference>
<dbReference type="Gene3D" id="1.20.140.150">
    <property type="match status" value="1"/>
</dbReference>
<dbReference type="InterPro" id="IPR050579">
    <property type="entry name" value="PMP-22/EMP/MP20-like"/>
</dbReference>
<dbReference type="InterPro" id="IPR004031">
    <property type="entry name" value="PMP22/EMP/MP20/Claudin"/>
</dbReference>
<dbReference type="PANTHER" id="PTHR10671">
    <property type="entry name" value="EPITHELIAL MEMBRANE PROTEIN-RELATED"/>
    <property type="match status" value="1"/>
</dbReference>
<dbReference type="PANTHER" id="PTHR10671:SF34">
    <property type="entry name" value="PROTEIN NKG7"/>
    <property type="match status" value="1"/>
</dbReference>
<dbReference type="Pfam" id="PF00822">
    <property type="entry name" value="PMP22_Claudin"/>
    <property type="match status" value="1"/>
</dbReference>
<organism>
    <name type="scientific">Bos taurus</name>
    <name type="common">Bovine</name>
    <dbReference type="NCBI Taxonomy" id="9913"/>
    <lineage>
        <taxon>Eukaryota</taxon>
        <taxon>Metazoa</taxon>
        <taxon>Chordata</taxon>
        <taxon>Craniata</taxon>
        <taxon>Vertebrata</taxon>
        <taxon>Euteleostomi</taxon>
        <taxon>Mammalia</taxon>
        <taxon>Eutheria</taxon>
        <taxon>Laurasiatheria</taxon>
        <taxon>Artiodactyla</taxon>
        <taxon>Ruminantia</taxon>
        <taxon>Pecora</taxon>
        <taxon>Bovidae</taxon>
        <taxon>Bovinae</taxon>
        <taxon>Bos</taxon>
    </lineage>
</organism>
<reference key="1">
    <citation type="submission" date="2005-09" db="EMBL/GenBank/DDBJ databases">
        <authorList>
            <consortium name="NIH - Mammalian Gene Collection (MGC) project"/>
        </authorList>
    </citation>
    <scope>NUCLEOTIDE SEQUENCE [LARGE SCALE MRNA]</scope>
    <source>
        <strain>Hereford</strain>
        <tissue>Ascending colon</tissue>
    </source>
</reference>
<accession>Q2KJ11</accession>
<gene>
    <name type="primary">NKG7</name>
</gene>
<protein>
    <recommendedName>
        <fullName>Protein NKG7</fullName>
    </recommendedName>
    <alternativeName>
        <fullName>Natural killer cell protein 7</fullName>
    </alternativeName>
</protein>
<name>NKG7_BOVIN</name>
<evidence type="ECO:0000250" key="1">
    <source>
        <dbReference type="UniProtKB" id="Q16617"/>
    </source>
</evidence>
<evidence type="ECO:0000250" key="2">
    <source>
        <dbReference type="UniProtKB" id="Q99PA5"/>
    </source>
</evidence>
<evidence type="ECO:0000255" key="3"/>
<evidence type="ECO:0000305" key="4"/>
<feature type="chain" id="PRO_0000244415" description="Protein NKG7">
    <location>
        <begin position="1"/>
        <end position="165"/>
    </location>
</feature>
<feature type="transmembrane region" description="Helical" evidence="3">
    <location>
        <begin position="9"/>
        <end position="29"/>
    </location>
</feature>
<feature type="transmembrane region" description="Helical" evidence="3">
    <location>
        <begin position="61"/>
        <end position="81"/>
    </location>
</feature>
<feature type="transmembrane region" description="Helical" evidence="3">
    <location>
        <begin position="92"/>
        <end position="112"/>
    </location>
</feature>
<feature type="transmembrane region" description="Helical" evidence="3">
    <location>
        <begin position="133"/>
        <end position="153"/>
    </location>
</feature>
<comment type="function">
    <text evidence="2">Regulates cytotoxic granule exocytosis in effector lymphocytes, thus acting as a critical mediator of inflammation in a broad range of infectious and non-infectious diseases (By similarity). Essential for cytotoxic degranulation of natural killer (NK) cells and CD8(+) T-cells and for the activation of CD4(+) T-cells following infection (By similarity). Plays a critical role in CD8(+) T-cell and NK cell-mediated cytolysis of target cells and contributes to the cytolytic activity via the perforin/granzyme pathway by enhancing exocytosis of LAMP1-carrying lytic granules (By similarity). Contributes to NK cell-mediated control of cancer metastasis (By similarity).</text>
</comment>
<comment type="subcellular location">
    <subcellularLocation>
        <location evidence="1">Cell membrane</location>
        <topology evidence="1">Multi-pass membrane protein</topology>
    </subcellularLocation>
    <subcellularLocation>
        <location evidence="1">Cytolytic granule membrane</location>
        <topology evidence="1">Multi-pass membrane protein</topology>
    </subcellularLocation>
</comment>
<comment type="similarity">
    <text evidence="4">Belongs to the PMP-22/EMP/MP20 family.</text>
</comment>
<keyword id="KW-1003">Cell membrane</keyword>
<keyword id="KW-0204">Cytolysis</keyword>
<keyword id="KW-0395">Inflammatory response</keyword>
<keyword id="KW-0458">Lysosome</keyword>
<keyword id="KW-0472">Membrane</keyword>
<keyword id="KW-1185">Reference proteome</keyword>
<keyword id="KW-0812">Transmembrane</keyword>
<keyword id="KW-1133">Transmembrane helix</keyword>
<sequence length="165" mass="17758">MEPCRSLALLTSSLGLVSLLVAVSTNFWFAARGPGFSSHSGLWPSKDQVSVAGYIHVTQSFCILAVLWGLISTAFLVMSCIPSLSAPGRGPIVSTFMGFAGALSLIVAMTVYTIERWNQPANPQVQSFFSWSFYLGWVSTLLFLCTGGLSLGAHCTTHRPDYEAV</sequence>